<comment type="function">
    <text evidence="1">Catalyzes the synthesis of activated sulfate.</text>
</comment>
<comment type="catalytic activity">
    <reaction>
        <text>adenosine 5'-phosphosulfate + ATP = 3'-phosphoadenylyl sulfate + ADP + H(+)</text>
        <dbReference type="Rhea" id="RHEA:24152"/>
        <dbReference type="ChEBI" id="CHEBI:15378"/>
        <dbReference type="ChEBI" id="CHEBI:30616"/>
        <dbReference type="ChEBI" id="CHEBI:58243"/>
        <dbReference type="ChEBI" id="CHEBI:58339"/>
        <dbReference type="ChEBI" id="CHEBI:456216"/>
        <dbReference type="EC" id="2.7.1.25"/>
    </reaction>
</comment>
<comment type="pathway">
    <text>Sulfur metabolism; hydrogen sulfide biosynthesis; sulfite from sulfate: step 2/3.</text>
</comment>
<comment type="similarity">
    <text evidence="2">Belongs to the APS kinase family.</text>
</comment>
<organism>
    <name type="scientific">Escherichia coli O157:H7</name>
    <dbReference type="NCBI Taxonomy" id="83334"/>
    <lineage>
        <taxon>Bacteria</taxon>
        <taxon>Pseudomonadati</taxon>
        <taxon>Pseudomonadota</taxon>
        <taxon>Gammaproteobacteria</taxon>
        <taxon>Enterobacterales</taxon>
        <taxon>Enterobacteriaceae</taxon>
        <taxon>Escherichia</taxon>
    </lineage>
</organism>
<sequence>MALHDENVVWHSHPVTVQQRELHHGHRGVVLWFTGLSGSGKSTVAGALEEALHKLGVSTYLLDGDNVRHGLCSDLGFSDADRKENIRRVGEVANLMVEAGLVVLTAFISPHRAERQMVRERVGEGRFIEVFVDTPLAICEARDPKGLYKKARAGELRNFTGIDSVYEAPESAEIHLNGEQLVTNLVQQLLDLLRQNDIIRS</sequence>
<gene>
    <name type="primary">cysC</name>
    <name type="ordered locus">Z4058</name>
    <name type="ordered locus">ECs3604</name>
</gene>
<proteinExistence type="inferred from homology"/>
<dbReference type="EC" id="2.7.1.25"/>
<dbReference type="EMBL" id="AE005174">
    <property type="protein sequence ID" value="AAG57857.1"/>
    <property type="molecule type" value="Genomic_DNA"/>
</dbReference>
<dbReference type="EMBL" id="BA000007">
    <property type="protein sequence ID" value="BAB37027.1"/>
    <property type="molecule type" value="Genomic_DNA"/>
</dbReference>
<dbReference type="PIR" id="D91079">
    <property type="entry name" value="D91079"/>
</dbReference>
<dbReference type="PIR" id="E85924">
    <property type="entry name" value="E85924"/>
</dbReference>
<dbReference type="RefSeq" id="NP_311631.1">
    <property type="nucleotide sequence ID" value="NC_002695.1"/>
</dbReference>
<dbReference type="RefSeq" id="WP_001173673.1">
    <property type="nucleotide sequence ID" value="NZ_VOAI01000003.1"/>
</dbReference>
<dbReference type="SMR" id="P0A6J2"/>
<dbReference type="STRING" id="155864.Z4058"/>
<dbReference type="GeneID" id="914674"/>
<dbReference type="GeneID" id="93779256"/>
<dbReference type="KEGG" id="ece:Z4058"/>
<dbReference type="KEGG" id="ecs:ECs_3604"/>
<dbReference type="PATRIC" id="fig|386585.9.peg.3767"/>
<dbReference type="eggNOG" id="COG0529">
    <property type="taxonomic scope" value="Bacteria"/>
</dbReference>
<dbReference type="HOGENOM" id="CLU_046932_1_0_6"/>
<dbReference type="OMA" id="HENTVEE"/>
<dbReference type="UniPathway" id="UPA00140">
    <property type="reaction ID" value="UER00205"/>
</dbReference>
<dbReference type="Proteomes" id="UP000000558">
    <property type="component" value="Chromosome"/>
</dbReference>
<dbReference type="Proteomes" id="UP000002519">
    <property type="component" value="Chromosome"/>
</dbReference>
<dbReference type="GO" id="GO:0004020">
    <property type="term" value="F:adenylylsulfate kinase activity"/>
    <property type="evidence" value="ECO:0007669"/>
    <property type="project" value="UniProtKB-UniRule"/>
</dbReference>
<dbReference type="GO" id="GO:0005524">
    <property type="term" value="F:ATP binding"/>
    <property type="evidence" value="ECO:0007669"/>
    <property type="project" value="UniProtKB-UniRule"/>
</dbReference>
<dbReference type="GO" id="GO:0070814">
    <property type="term" value="P:hydrogen sulfide biosynthetic process"/>
    <property type="evidence" value="ECO:0007669"/>
    <property type="project" value="UniProtKB-UniRule"/>
</dbReference>
<dbReference type="GO" id="GO:0000103">
    <property type="term" value="P:sulfate assimilation"/>
    <property type="evidence" value="ECO:0007669"/>
    <property type="project" value="UniProtKB-UniRule"/>
</dbReference>
<dbReference type="CDD" id="cd02027">
    <property type="entry name" value="APSK"/>
    <property type="match status" value="1"/>
</dbReference>
<dbReference type="FunFam" id="3.40.50.300:FF:000212">
    <property type="entry name" value="Adenylyl-sulfate kinase"/>
    <property type="match status" value="1"/>
</dbReference>
<dbReference type="Gene3D" id="3.40.50.300">
    <property type="entry name" value="P-loop containing nucleotide triphosphate hydrolases"/>
    <property type="match status" value="1"/>
</dbReference>
<dbReference type="HAMAP" id="MF_00065">
    <property type="entry name" value="Adenylyl_sulf_kinase"/>
    <property type="match status" value="1"/>
</dbReference>
<dbReference type="InterPro" id="IPR002891">
    <property type="entry name" value="APS_kinase"/>
</dbReference>
<dbReference type="InterPro" id="IPR027417">
    <property type="entry name" value="P-loop_NTPase"/>
</dbReference>
<dbReference type="NCBIfam" id="TIGR00455">
    <property type="entry name" value="apsK"/>
    <property type="match status" value="1"/>
</dbReference>
<dbReference type="NCBIfam" id="NF003013">
    <property type="entry name" value="PRK03846.1"/>
    <property type="match status" value="1"/>
</dbReference>
<dbReference type="PANTHER" id="PTHR11055:SF63">
    <property type="entry name" value="ADENYLYL-SULFATE KINASE 1, CHLOROPLASTIC"/>
    <property type="match status" value="1"/>
</dbReference>
<dbReference type="PANTHER" id="PTHR11055">
    <property type="entry name" value="BIFUNCTIONAL 3'-PHOSPHOADENOSINE 5'-PHOSPHOSULFATE SYNTHASE"/>
    <property type="match status" value="1"/>
</dbReference>
<dbReference type="Pfam" id="PF01583">
    <property type="entry name" value="APS_kinase"/>
    <property type="match status" value="1"/>
</dbReference>
<dbReference type="SUPFAM" id="SSF52540">
    <property type="entry name" value="P-loop containing nucleoside triphosphate hydrolases"/>
    <property type="match status" value="1"/>
</dbReference>
<protein>
    <recommendedName>
        <fullName>Adenylyl-sulfate kinase</fullName>
        <ecNumber>2.7.1.25</ecNumber>
    </recommendedName>
    <alternativeName>
        <fullName>APS kinase</fullName>
    </alternativeName>
    <alternativeName>
        <fullName>ATP adenosine-5'-phosphosulfate 3'-phosphotransferase</fullName>
    </alternativeName>
    <alternativeName>
        <fullName>Adenosine-5'-phosphosulfate kinase</fullName>
    </alternativeName>
</protein>
<feature type="initiator methionine" description="Removed" evidence="1">
    <location>
        <position position="1"/>
    </location>
</feature>
<feature type="chain" id="PRO_0000105910" description="Adenylyl-sulfate kinase">
    <location>
        <begin position="2"/>
        <end position="201"/>
    </location>
</feature>
<feature type="active site" description="Phosphoserine intermediate">
    <location>
        <position position="109"/>
    </location>
</feature>
<feature type="binding site" evidence="1">
    <location>
        <begin position="35"/>
        <end position="42"/>
    </location>
    <ligand>
        <name>ATP</name>
        <dbReference type="ChEBI" id="CHEBI:30616"/>
    </ligand>
</feature>
<feature type="sequence conflict" description="In Ref. 1." evidence="2" ref="1">
    <original>T</original>
    <variation>Q</variation>
    <location>
        <position position="134"/>
    </location>
</feature>
<reference key="1">
    <citation type="journal article" date="2001" name="Nature">
        <title>Genome sequence of enterohaemorrhagic Escherichia coli O157:H7.</title>
        <authorList>
            <person name="Perna N.T."/>
            <person name="Plunkett G. III"/>
            <person name="Burland V."/>
            <person name="Mau B."/>
            <person name="Glasner J.D."/>
            <person name="Rose D.J."/>
            <person name="Mayhew G.F."/>
            <person name="Evans P.S."/>
            <person name="Gregor J."/>
            <person name="Kirkpatrick H.A."/>
            <person name="Posfai G."/>
            <person name="Hackett J."/>
            <person name="Klink S."/>
            <person name="Boutin A."/>
            <person name="Shao Y."/>
            <person name="Miller L."/>
            <person name="Grotbeck E.J."/>
            <person name="Davis N.W."/>
            <person name="Lim A."/>
            <person name="Dimalanta E.T."/>
            <person name="Potamousis K."/>
            <person name="Apodaca J."/>
            <person name="Anantharaman T.S."/>
            <person name="Lin J."/>
            <person name="Yen G."/>
            <person name="Schwartz D.C."/>
            <person name="Welch R.A."/>
            <person name="Blattner F.R."/>
        </authorList>
    </citation>
    <scope>NUCLEOTIDE SEQUENCE [LARGE SCALE GENOMIC DNA]</scope>
    <source>
        <strain>O157:H7 / EDL933 / ATCC 700927 / EHEC</strain>
    </source>
</reference>
<reference key="2">
    <citation type="journal article" date="2001" name="DNA Res.">
        <title>Complete genome sequence of enterohemorrhagic Escherichia coli O157:H7 and genomic comparison with a laboratory strain K-12.</title>
        <authorList>
            <person name="Hayashi T."/>
            <person name="Makino K."/>
            <person name="Ohnishi M."/>
            <person name="Kurokawa K."/>
            <person name="Ishii K."/>
            <person name="Yokoyama K."/>
            <person name="Han C.-G."/>
            <person name="Ohtsubo E."/>
            <person name="Nakayama K."/>
            <person name="Murata T."/>
            <person name="Tanaka M."/>
            <person name="Tobe T."/>
            <person name="Iida T."/>
            <person name="Takami H."/>
            <person name="Honda T."/>
            <person name="Sasakawa C."/>
            <person name="Ogasawara N."/>
            <person name="Yasunaga T."/>
            <person name="Kuhara S."/>
            <person name="Shiba T."/>
            <person name="Hattori M."/>
            <person name="Shinagawa H."/>
        </authorList>
    </citation>
    <scope>NUCLEOTIDE SEQUENCE [LARGE SCALE GENOMIC DNA]</scope>
    <source>
        <strain>O157:H7 / Sakai / RIMD 0509952 / EHEC</strain>
    </source>
</reference>
<name>CYSC_ECO57</name>
<evidence type="ECO:0000250" key="1"/>
<evidence type="ECO:0000305" key="2"/>
<accession>P0A6J2</accession>
<accession>P23846</accession>
<accession>P78105</accession>
<accession>Q59376</accession>
<accession>Q59389</accession>
<keyword id="KW-0067">ATP-binding</keyword>
<keyword id="KW-0418">Kinase</keyword>
<keyword id="KW-0547">Nucleotide-binding</keyword>
<keyword id="KW-0597">Phosphoprotein</keyword>
<keyword id="KW-1185">Reference proteome</keyword>
<keyword id="KW-0808">Transferase</keyword>